<feature type="chain" id="PRO_0000434753" description="Isoleucine 2-epimerase">
    <location>
        <begin position="1"/>
        <end position="450"/>
    </location>
</feature>
<feature type="binding site" evidence="1">
    <location>
        <begin position="115"/>
        <end position="116"/>
    </location>
    <ligand>
        <name>pyridoxal 5'-phosphate</name>
        <dbReference type="ChEBI" id="CHEBI:597326"/>
    </ligand>
</feature>
<feature type="binding site" evidence="1">
    <location>
        <position position="142"/>
    </location>
    <ligand>
        <name>pyridoxal 5'-phosphate</name>
        <dbReference type="ChEBI" id="CHEBI:597326"/>
    </ligand>
</feature>
<feature type="binding site" evidence="1">
    <location>
        <begin position="250"/>
        <end position="253"/>
    </location>
    <ligand>
        <name>pyridoxal 5'-phosphate</name>
        <dbReference type="ChEBI" id="CHEBI:597326"/>
    </ligand>
</feature>
<feature type="binding site" evidence="1">
    <location>
        <position position="309"/>
    </location>
    <ligand>
        <name>pyridoxal 5'-phosphate</name>
        <dbReference type="ChEBI" id="CHEBI:597326"/>
    </ligand>
</feature>
<feature type="modified residue" description="N6-(pyridoxal phosphate)lysine" evidence="1">
    <location>
        <position position="280"/>
    </location>
</feature>
<feature type="helix" evidence="5">
    <location>
        <begin position="5"/>
        <end position="14"/>
    </location>
</feature>
<feature type="turn" evidence="5">
    <location>
        <begin position="15"/>
        <end position="17"/>
    </location>
</feature>
<feature type="helix" evidence="5">
    <location>
        <begin position="20"/>
        <end position="22"/>
    </location>
</feature>
<feature type="strand" evidence="5">
    <location>
        <begin position="30"/>
        <end position="36"/>
    </location>
</feature>
<feature type="strand" evidence="5">
    <location>
        <begin position="38"/>
        <end position="41"/>
    </location>
</feature>
<feature type="strand" evidence="5">
    <location>
        <begin position="46"/>
        <end position="51"/>
    </location>
</feature>
<feature type="helix" evidence="5">
    <location>
        <begin position="52"/>
        <end position="55"/>
    </location>
</feature>
<feature type="helix" evidence="5">
    <location>
        <begin position="64"/>
        <end position="76"/>
    </location>
</feature>
<feature type="turn" evidence="5">
    <location>
        <begin position="82"/>
        <end position="84"/>
    </location>
</feature>
<feature type="strand" evidence="5">
    <location>
        <begin position="85"/>
        <end position="87"/>
    </location>
</feature>
<feature type="helix" evidence="5">
    <location>
        <begin position="88"/>
        <end position="100"/>
    </location>
</feature>
<feature type="strand" evidence="5">
    <location>
        <begin position="101"/>
        <end position="105"/>
    </location>
</feature>
<feature type="strand" evidence="5">
    <location>
        <begin position="107"/>
        <end position="114"/>
    </location>
</feature>
<feature type="helix" evidence="5">
    <location>
        <begin position="115"/>
        <end position="130"/>
    </location>
</feature>
<feature type="strand" evidence="5">
    <location>
        <begin position="134"/>
        <end position="138"/>
    </location>
</feature>
<feature type="helix" evidence="5">
    <location>
        <begin position="147"/>
        <end position="152"/>
    </location>
</feature>
<feature type="helix" evidence="5">
    <location>
        <begin position="157"/>
        <end position="159"/>
    </location>
</feature>
<feature type="turn" evidence="5">
    <location>
        <begin position="160"/>
        <end position="163"/>
    </location>
</feature>
<feature type="strand" evidence="5">
    <location>
        <begin position="168"/>
        <end position="173"/>
    </location>
</feature>
<feature type="strand" evidence="5">
    <location>
        <begin position="178"/>
        <end position="180"/>
    </location>
</feature>
<feature type="helix" evidence="5">
    <location>
        <begin position="187"/>
        <end position="202"/>
    </location>
</feature>
<feature type="turn" evidence="5">
    <location>
        <begin position="203"/>
        <end position="205"/>
    </location>
</feature>
<feature type="helix" evidence="5">
    <location>
        <begin position="208"/>
        <end position="210"/>
    </location>
</feature>
<feature type="strand" evidence="5">
    <location>
        <begin position="211"/>
        <end position="216"/>
    </location>
</feature>
<feature type="strand" evidence="5">
    <location>
        <begin position="218"/>
        <end position="220"/>
    </location>
</feature>
<feature type="turn" evidence="5">
    <location>
        <begin position="221"/>
        <end position="224"/>
    </location>
</feature>
<feature type="strand" evidence="5">
    <location>
        <begin position="225"/>
        <end position="227"/>
    </location>
</feature>
<feature type="helix" evidence="5">
    <location>
        <begin position="230"/>
        <end position="243"/>
    </location>
</feature>
<feature type="strand" evidence="5">
    <location>
        <begin position="246"/>
        <end position="250"/>
    </location>
</feature>
<feature type="turn" evidence="5">
    <location>
        <begin position="252"/>
        <end position="259"/>
    </location>
</feature>
<feature type="strand" evidence="5">
    <location>
        <begin position="260"/>
        <end position="263"/>
    </location>
</feature>
<feature type="helix" evidence="5">
    <location>
        <begin position="264"/>
        <end position="267"/>
    </location>
</feature>
<feature type="strand" evidence="5">
    <location>
        <begin position="268"/>
        <end position="270"/>
    </location>
</feature>
<feature type="strand" evidence="5">
    <location>
        <begin position="274"/>
        <end position="278"/>
    </location>
</feature>
<feature type="helix" evidence="5">
    <location>
        <begin position="280"/>
        <end position="283"/>
    </location>
</feature>
<feature type="strand" evidence="5">
    <location>
        <begin position="289"/>
        <end position="294"/>
    </location>
</feature>
<feature type="helix" evidence="5">
    <location>
        <begin position="295"/>
        <end position="298"/>
    </location>
</feature>
<feature type="turn" evidence="6">
    <location>
        <begin position="303"/>
        <end position="305"/>
    </location>
</feature>
<feature type="turn" evidence="5">
    <location>
        <begin position="309"/>
        <end position="312"/>
    </location>
</feature>
<feature type="helix" evidence="5">
    <location>
        <begin position="314"/>
        <end position="329"/>
    </location>
</feature>
<feature type="helix" evidence="5">
    <location>
        <begin position="332"/>
        <end position="353"/>
    </location>
</feature>
<feature type="strand" evidence="5">
    <location>
        <begin position="357"/>
        <end position="365"/>
    </location>
</feature>
<feature type="strand" evidence="5">
    <location>
        <begin position="367"/>
        <end position="373"/>
    </location>
</feature>
<feature type="turn" evidence="5">
    <location>
        <begin position="375"/>
        <end position="377"/>
    </location>
</feature>
<feature type="helix" evidence="5">
    <location>
        <begin position="382"/>
        <end position="394"/>
    </location>
</feature>
<feature type="strand" evidence="5">
    <location>
        <begin position="400"/>
        <end position="402"/>
    </location>
</feature>
<feature type="turn" evidence="5">
    <location>
        <begin position="403"/>
        <end position="405"/>
    </location>
</feature>
<feature type="strand" evidence="5">
    <location>
        <begin position="406"/>
        <end position="409"/>
    </location>
</feature>
<feature type="helix" evidence="5">
    <location>
        <begin position="417"/>
        <end position="435"/>
    </location>
</feature>
<comment type="function">
    <text evidence="2">Catalyzes the epimerization of L-isoleucine to D-allo-isoleucine and D-allo-isoleucine to L-isoleucine. Can also catalyze the racemization of many nonpolar amino acids, including leucine and valine. Does not have GABA aminotransferase activity.</text>
</comment>
<comment type="catalytic activity">
    <reaction evidence="2">
        <text>L-isoleucine = D-allo-isoleucine</text>
        <dbReference type="Rhea" id="RHEA:45560"/>
        <dbReference type="ChEBI" id="CHEBI:58045"/>
        <dbReference type="ChEBI" id="CHEBI:85306"/>
        <dbReference type="EC" id="5.1.1.21"/>
    </reaction>
</comment>
<comment type="cofactor">
    <cofactor evidence="2">
        <name>pyridoxal 5'-phosphate</name>
        <dbReference type="ChEBI" id="CHEBI:597326"/>
    </cofactor>
</comment>
<comment type="biophysicochemical properties">
    <kinetics>
        <KM evidence="2">5 mM for L-isoleucine</KM>
        <KM evidence="2">13.2 mM for D-allo-isoleucine</KM>
        <Vmax evidence="2">153.0 umol/min/mg enzyme for the forward reaction</Vmax>
        <Vmax evidence="2">286.0 umol/min/mg enzyme for the reverse reaction</Vmax>
        <text evidence="2">kcat is 502 sec(-1) with L-isoleucine as substrate. kcat is 939 sec(-1) with D-allo-isoleucine as substrate.</text>
    </kinetics>
    <phDependence>
        <text evidence="2">Optimum pH is 5.0 for the forward reaction, and 6.0 for the reverse reaction.</text>
    </phDependence>
    <temperatureDependence>
        <text evidence="2">Optimum temperature is 50 degrees Celsius for the forward reaction, and 45 degrees Celsius for the reverse reaction.</text>
    </temperatureDependence>
</comment>
<comment type="subunit">
    <text evidence="2">Homotetramer.</text>
</comment>
<comment type="similarity">
    <text evidence="4">Belongs to the class-III pyridoxal-phosphate-dependent aminotransferase family.</text>
</comment>
<name>ILE2E_LENBU</name>
<keyword id="KW-0002">3D-structure</keyword>
<keyword id="KW-0413">Isomerase</keyword>
<keyword id="KW-0663">Pyridoxal phosphate</keyword>
<dbReference type="EC" id="5.1.1.21" evidence="2"/>
<dbReference type="EMBL" id="KC413940">
    <property type="protein sequence ID" value="AGE45209.1"/>
    <property type="molecule type" value="Genomic_DNA"/>
</dbReference>
<dbReference type="PDB" id="4YSN">
    <property type="method" value="X-ray"/>
    <property type="resolution" value="1.94 A"/>
    <property type="chains" value="A/B/C/D=1-450"/>
</dbReference>
<dbReference type="PDB" id="4YSV">
    <property type="method" value="X-ray"/>
    <property type="resolution" value="2.77 A"/>
    <property type="chains" value="A=1-450"/>
</dbReference>
<dbReference type="PDB" id="5LL2">
    <property type="method" value="X-ray"/>
    <property type="resolution" value="2.60 A"/>
    <property type="chains" value="A/B/C/D=1-450"/>
</dbReference>
<dbReference type="PDB" id="5LL3">
    <property type="method" value="X-ray"/>
    <property type="resolution" value="2.15 A"/>
    <property type="chains" value="A/B/C/D=1-450"/>
</dbReference>
<dbReference type="PDB" id="5WYA">
    <property type="method" value="X-ray"/>
    <property type="resolution" value="2.65 A"/>
    <property type="chains" value="A/B/C/D=1-450"/>
</dbReference>
<dbReference type="PDB" id="5WYF">
    <property type="method" value="X-ray"/>
    <property type="resolution" value="2.12 A"/>
    <property type="chains" value="A/B/C/D=1-450"/>
</dbReference>
<dbReference type="PDBsum" id="4YSN"/>
<dbReference type="PDBsum" id="4YSV"/>
<dbReference type="PDBsum" id="5LL2"/>
<dbReference type="PDBsum" id="5LL3"/>
<dbReference type="PDBsum" id="5WYA"/>
<dbReference type="PDBsum" id="5WYF"/>
<dbReference type="SMR" id="M1GRN3"/>
<dbReference type="KEGG" id="ag:AGE45209"/>
<dbReference type="BRENDA" id="5.1.1.21">
    <property type="organism ID" value="2852"/>
</dbReference>
<dbReference type="GO" id="GO:0042802">
    <property type="term" value="F:identical protein binding"/>
    <property type="evidence" value="ECO:0007669"/>
    <property type="project" value="TreeGrafter"/>
</dbReference>
<dbReference type="GO" id="GO:0016853">
    <property type="term" value="F:isomerase activity"/>
    <property type="evidence" value="ECO:0007669"/>
    <property type="project" value="UniProtKB-KW"/>
</dbReference>
<dbReference type="GO" id="GO:0030170">
    <property type="term" value="F:pyridoxal phosphate binding"/>
    <property type="evidence" value="ECO:0007669"/>
    <property type="project" value="InterPro"/>
</dbReference>
<dbReference type="GO" id="GO:0008483">
    <property type="term" value="F:transaminase activity"/>
    <property type="evidence" value="ECO:0007669"/>
    <property type="project" value="InterPro"/>
</dbReference>
<dbReference type="CDD" id="cd00610">
    <property type="entry name" value="OAT_like"/>
    <property type="match status" value="1"/>
</dbReference>
<dbReference type="FunFam" id="3.40.640.10:FF:000004">
    <property type="entry name" value="Acetylornithine aminotransferase"/>
    <property type="match status" value="1"/>
</dbReference>
<dbReference type="Gene3D" id="3.90.1150.10">
    <property type="entry name" value="Aspartate Aminotransferase, domain 1"/>
    <property type="match status" value="1"/>
</dbReference>
<dbReference type="Gene3D" id="3.40.640.10">
    <property type="entry name" value="Type I PLP-dependent aspartate aminotransferase-like (Major domain)"/>
    <property type="match status" value="1"/>
</dbReference>
<dbReference type="InterPro" id="IPR005814">
    <property type="entry name" value="Aminotrans_3"/>
</dbReference>
<dbReference type="InterPro" id="IPR049704">
    <property type="entry name" value="Aminotrans_3_PPA_site"/>
</dbReference>
<dbReference type="InterPro" id="IPR050103">
    <property type="entry name" value="Class-III_PLP-dep_AT"/>
</dbReference>
<dbReference type="InterPro" id="IPR015424">
    <property type="entry name" value="PyrdxlP-dep_Trfase"/>
</dbReference>
<dbReference type="InterPro" id="IPR015421">
    <property type="entry name" value="PyrdxlP-dep_Trfase_major"/>
</dbReference>
<dbReference type="InterPro" id="IPR015422">
    <property type="entry name" value="PyrdxlP-dep_Trfase_small"/>
</dbReference>
<dbReference type="NCBIfam" id="NF006368">
    <property type="entry name" value="PRK08593.1"/>
    <property type="match status" value="1"/>
</dbReference>
<dbReference type="PANTHER" id="PTHR11986">
    <property type="entry name" value="AMINOTRANSFERASE CLASS III"/>
    <property type="match status" value="1"/>
</dbReference>
<dbReference type="PANTHER" id="PTHR11986:SF58">
    <property type="entry name" value="LEUCINE_METHIONINE RACEMASE"/>
    <property type="match status" value="1"/>
</dbReference>
<dbReference type="Pfam" id="PF00202">
    <property type="entry name" value="Aminotran_3"/>
    <property type="match status" value="1"/>
</dbReference>
<dbReference type="PIRSF" id="PIRSF000521">
    <property type="entry name" value="Transaminase_4ab_Lys_Orn"/>
    <property type="match status" value="1"/>
</dbReference>
<dbReference type="SUPFAM" id="SSF53383">
    <property type="entry name" value="PLP-dependent transferases"/>
    <property type="match status" value="1"/>
</dbReference>
<dbReference type="PROSITE" id="PS00600">
    <property type="entry name" value="AA_TRANSFER_CLASS_3"/>
    <property type="match status" value="1"/>
</dbReference>
<organism>
    <name type="scientific">Lentilactobacillus buchneri</name>
    <name type="common">Lactobacillus buchneri</name>
    <dbReference type="NCBI Taxonomy" id="1581"/>
    <lineage>
        <taxon>Bacteria</taxon>
        <taxon>Bacillati</taxon>
        <taxon>Bacillota</taxon>
        <taxon>Bacilli</taxon>
        <taxon>Lactobacillales</taxon>
        <taxon>Lactobacillaceae</taxon>
        <taxon>Lentilactobacillus</taxon>
    </lineage>
</organism>
<protein>
    <recommendedName>
        <fullName evidence="3">Isoleucine 2-epimerase</fullName>
        <ecNumber evidence="2">5.1.1.21</ecNumber>
    </recommendedName>
    <alternativeName>
        <fullName evidence="3">BCAA racemase</fullName>
    </alternativeName>
</protein>
<accession>M1GRN3</accession>
<evidence type="ECO:0000250" key="1">
    <source>
        <dbReference type="UniProtKB" id="P22256"/>
    </source>
</evidence>
<evidence type="ECO:0000269" key="2">
    <source>
    </source>
</evidence>
<evidence type="ECO:0000303" key="3">
    <source>
    </source>
</evidence>
<evidence type="ECO:0000305" key="4"/>
<evidence type="ECO:0007829" key="5">
    <source>
        <dbReference type="PDB" id="4YSN"/>
    </source>
</evidence>
<evidence type="ECO:0007829" key="6">
    <source>
        <dbReference type="PDB" id="5LL3"/>
    </source>
</evidence>
<reference key="1">
    <citation type="journal article" date="2013" name="J. Bacteriol.">
        <title>Identification, purification, and characterization of a novel amino acid racemase, isoleucine 2-epimerase, from lactobacillus species.</title>
        <authorList>
            <person name="Mutaguchi Y."/>
            <person name="Ohmori T."/>
            <person name="Wakamatsu T."/>
            <person name="Doi K."/>
            <person name="Ohshima T."/>
        </authorList>
    </citation>
    <scope>NUCLEOTIDE SEQUENCE [GENOMIC DNA]</scope>
    <scope>FUNCTION</scope>
    <scope>CATALYTIC ACTIVITY</scope>
    <scope>COFACTOR</scope>
    <scope>BIOPHYSICOCHEMICAL PROPERTIES</scope>
    <scope>SUBUNIT</scope>
    <source>
        <strain>JCM 1115</strain>
    </source>
</reference>
<proteinExistence type="evidence at protein level"/>
<sequence>MGKLDKASKLIDEENKYYARSARINYYNLVIDHAHGATLVDVDGNKYIDLLASASAINVGHTHEKVVKAIADQAQKLIHYTPAYFHHVPGMELSEKLAKIAPGNSPKMVSFGNSGSDANDAIIKFARAYTGRQYIVSYMGSYHGSTYGSQTLSGSSLNMTRKIGPMLPSVVHVPYPDSYRTYPGETEHDVSLRYFNEFKKPFESFLPADETACVLIEPIQGDGGIIKAPEEYMQLVYKFCHEHGILFAIDEVNQGLGRTGKMWAIQQFKDIEPDLMSVGKSLASGMPLSAVIGKKEVMQSLDAPAHLFTTAGNPVCSAASLATLDVIEYEGLVEKSATDGAYAKQRFLEMQQRHPMIGDVRMWGLNGGIELVKDPKTKEPDSDAATKVIYYAFAHGVVIITLAGNILRFQPPLVIPREQLDQALQVLDDAFTAVENGEVTIPKDTGKIGW</sequence>